<sequence length="389" mass="42414">MNDTTQPTKGDAVKKILALILGLCLIVPVISIAGCVGGGNSQPSNNEKPSTIIIRTTGATFPKYQIQKWIEDYQKTHPNVKIEYEGGGSGYGQEAFAKGLTDIGRTDPPVKESMWKKFLSTGDQPLQFPEIVGAVVVTYNIPEIGDKTLKLSRDVLADIFLGKIEYWDDERIKKINPEIADKLPHEKIIVVHRSDASGTTAIFTTYLSLISKEWAEKVGAGKTVNWPTDNIGRGVAGKGNPGVVAIVKSTPYTVAYTELSYAIEQKLPVAALENKNGKFVKPTDETIKAAVSAVKASIPNPTEGYKEDLKQMLDAPGDNAYPIVAFTHLLVWENKNGKHYSPEKAKAIKDFLTWVLTEGQKPEHLAPGYVGLPEDVAKIGLNAVNMIKE</sequence>
<feature type="chain" id="PRO_0000062778" description="Phosphate-binding protein PstS">
    <location>
        <begin position="1"/>
        <end position="389"/>
    </location>
</feature>
<feature type="transmembrane region" description="Helical" evidence="3">
    <location>
        <begin position="16"/>
        <end position="36"/>
    </location>
</feature>
<feature type="binding site" evidence="2">
    <location>
        <begin position="59"/>
        <end position="61"/>
    </location>
    <ligand>
        <name>phosphate</name>
        <dbReference type="ChEBI" id="CHEBI:43474"/>
    </ligand>
</feature>
<feature type="binding site" evidence="2">
    <location>
        <position position="89"/>
    </location>
    <ligand>
        <name>phosphate</name>
        <dbReference type="ChEBI" id="CHEBI:43474"/>
    </ligand>
</feature>
<feature type="binding site" evidence="2">
    <location>
        <position position="107"/>
    </location>
    <ligand>
        <name>phosphate</name>
        <dbReference type="ChEBI" id="CHEBI:43474"/>
    </ligand>
</feature>
<feature type="binding site" evidence="2">
    <location>
        <begin position="197"/>
        <end position="199"/>
    </location>
    <ligand>
        <name>phosphate</name>
        <dbReference type="ChEBI" id="CHEBI:43474"/>
    </ligand>
</feature>
<accession>Q58421</accession>
<reference key="1">
    <citation type="journal article" date="1996" name="Science">
        <title>Complete genome sequence of the methanogenic archaeon, Methanococcus jannaschii.</title>
        <authorList>
            <person name="Bult C.J."/>
            <person name="White O."/>
            <person name="Olsen G.J."/>
            <person name="Zhou L."/>
            <person name="Fleischmann R.D."/>
            <person name="Sutton G.G."/>
            <person name="Blake J.A."/>
            <person name="FitzGerald L.M."/>
            <person name="Clayton R.A."/>
            <person name="Gocayne J.D."/>
            <person name="Kerlavage A.R."/>
            <person name="Dougherty B.A."/>
            <person name="Tomb J.-F."/>
            <person name="Adams M.D."/>
            <person name="Reich C.I."/>
            <person name="Overbeek R."/>
            <person name="Kirkness E.F."/>
            <person name="Weinstock K.G."/>
            <person name="Merrick J.M."/>
            <person name="Glodek A."/>
            <person name="Scott J.L."/>
            <person name="Geoghagen N.S.M."/>
            <person name="Weidman J.F."/>
            <person name="Fuhrmann J.L."/>
            <person name="Nguyen D."/>
            <person name="Utterback T.R."/>
            <person name="Kelley J.M."/>
            <person name="Peterson J.D."/>
            <person name="Sadow P.W."/>
            <person name="Hanna M.C."/>
            <person name="Cotton M.D."/>
            <person name="Roberts K.M."/>
            <person name="Hurst M.A."/>
            <person name="Kaine B.P."/>
            <person name="Borodovsky M."/>
            <person name="Klenk H.-P."/>
            <person name="Fraser C.M."/>
            <person name="Smith H.O."/>
            <person name="Woese C.R."/>
            <person name="Venter J.C."/>
        </authorList>
    </citation>
    <scope>NUCLEOTIDE SEQUENCE [LARGE SCALE GENOMIC DNA]</scope>
    <source>
        <strain>ATCC 43067 / DSM 2661 / JAL-1 / JCM 10045 / NBRC 100440</strain>
    </source>
</reference>
<proteinExistence type="inferred from homology"/>
<dbReference type="EMBL" id="L77117">
    <property type="protein sequence ID" value="AAB99019.1"/>
    <property type="molecule type" value="Genomic_DNA"/>
</dbReference>
<dbReference type="PIR" id="F64426">
    <property type="entry name" value="F64426"/>
</dbReference>
<dbReference type="SMR" id="Q58421"/>
<dbReference type="FunCoup" id="Q58421">
    <property type="interactions" value="9"/>
</dbReference>
<dbReference type="STRING" id="243232.MJ_1015"/>
<dbReference type="PaxDb" id="243232-MJ_1015"/>
<dbReference type="EnsemblBacteria" id="AAB99019">
    <property type="protein sequence ID" value="AAB99019"/>
    <property type="gene ID" value="MJ_1015"/>
</dbReference>
<dbReference type="KEGG" id="mja:MJ_1015"/>
<dbReference type="eggNOG" id="arCOG00213">
    <property type="taxonomic scope" value="Archaea"/>
</dbReference>
<dbReference type="HOGENOM" id="CLU_034528_1_2_2"/>
<dbReference type="InParanoid" id="Q58421"/>
<dbReference type="PhylomeDB" id="Q58421"/>
<dbReference type="Proteomes" id="UP000000805">
    <property type="component" value="Chromosome"/>
</dbReference>
<dbReference type="GO" id="GO:0043190">
    <property type="term" value="C:ATP-binding cassette (ABC) transporter complex"/>
    <property type="evidence" value="ECO:0007669"/>
    <property type="project" value="InterPro"/>
</dbReference>
<dbReference type="GO" id="GO:0042301">
    <property type="term" value="F:phosphate ion binding"/>
    <property type="evidence" value="ECO:0007669"/>
    <property type="project" value="InterPro"/>
</dbReference>
<dbReference type="GO" id="GO:0035435">
    <property type="term" value="P:phosphate ion transmembrane transport"/>
    <property type="evidence" value="ECO:0007669"/>
    <property type="project" value="InterPro"/>
</dbReference>
<dbReference type="CDD" id="cd13565">
    <property type="entry name" value="PBP2_PstS"/>
    <property type="match status" value="1"/>
</dbReference>
<dbReference type="Gene3D" id="3.40.190.10">
    <property type="entry name" value="Periplasmic binding protein-like II"/>
    <property type="match status" value="2"/>
</dbReference>
<dbReference type="InterPro" id="IPR005673">
    <property type="entry name" value="ABC_phos-bd_PstS"/>
</dbReference>
<dbReference type="InterPro" id="IPR024370">
    <property type="entry name" value="PBP_domain"/>
</dbReference>
<dbReference type="InterPro" id="IPR050962">
    <property type="entry name" value="Phosphate-bind_PstS"/>
</dbReference>
<dbReference type="NCBIfam" id="TIGR00975">
    <property type="entry name" value="3a0107s03"/>
    <property type="match status" value="1"/>
</dbReference>
<dbReference type="PANTHER" id="PTHR42996">
    <property type="entry name" value="PHOSPHATE-BINDING PROTEIN PSTS"/>
    <property type="match status" value="1"/>
</dbReference>
<dbReference type="PANTHER" id="PTHR42996:SF1">
    <property type="entry name" value="PHOSPHATE-BINDING PROTEIN PSTS"/>
    <property type="match status" value="1"/>
</dbReference>
<dbReference type="Pfam" id="PF12849">
    <property type="entry name" value="PBP_like_2"/>
    <property type="match status" value="1"/>
</dbReference>
<dbReference type="PIRSF" id="PIRSF002756">
    <property type="entry name" value="PstS"/>
    <property type="match status" value="1"/>
</dbReference>
<dbReference type="SUPFAM" id="SSF53850">
    <property type="entry name" value="Periplasmic binding protein-like II"/>
    <property type="match status" value="1"/>
</dbReference>
<protein>
    <recommendedName>
        <fullName>Phosphate-binding protein PstS</fullName>
        <shortName>PBP</shortName>
    </recommendedName>
</protein>
<evidence type="ECO:0000250" key="1"/>
<evidence type="ECO:0000250" key="2">
    <source>
        <dbReference type="UniProtKB" id="P9WGT7"/>
    </source>
</evidence>
<evidence type="ECO:0000255" key="3"/>
<evidence type="ECO:0000305" key="4"/>
<comment type="function">
    <text evidence="1">Part of the ABC transporter complex PstSACB involved in phosphate import.</text>
</comment>
<comment type="subunit">
    <text evidence="4">The complex is composed of two ATP-binding proteins (PstB), two transmembrane proteins (PstC and PstA) and a solute-binding protein (PstS).</text>
</comment>
<comment type="subcellular location">
    <subcellularLocation>
        <location evidence="4">Cell membrane</location>
        <topology evidence="4">Single-pass membrane protein</topology>
    </subcellularLocation>
</comment>
<comment type="similarity">
    <text evidence="4">Belongs to the PstS family.</text>
</comment>
<name>PSTS_METJA</name>
<gene>
    <name type="primary">pstS</name>
    <name type="ordered locus">MJ1015</name>
</gene>
<organism>
    <name type="scientific">Methanocaldococcus jannaschii (strain ATCC 43067 / DSM 2661 / JAL-1 / JCM 10045 / NBRC 100440)</name>
    <name type="common">Methanococcus jannaschii</name>
    <dbReference type="NCBI Taxonomy" id="243232"/>
    <lineage>
        <taxon>Archaea</taxon>
        <taxon>Methanobacteriati</taxon>
        <taxon>Methanobacteriota</taxon>
        <taxon>Methanomada group</taxon>
        <taxon>Methanococci</taxon>
        <taxon>Methanococcales</taxon>
        <taxon>Methanocaldococcaceae</taxon>
        <taxon>Methanocaldococcus</taxon>
    </lineage>
</organism>
<keyword id="KW-1003">Cell membrane</keyword>
<keyword id="KW-0472">Membrane</keyword>
<keyword id="KW-0592">Phosphate transport</keyword>
<keyword id="KW-1185">Reference proteome</keyword>
<keyword id="KW-0812">Transmembrane</keyword>
<keyword id="KW-1133">Transmembrane helix</keyword>
<keyword id="KW-0813">Transport</keyword>